<name>YO91_BPP2</name>
<sequence length="109" mass="12872">MMAKIHEVKLHAKYFDLVLEGKKRAEFRKKDRNYERGDTLILHEWVQGVFTGRKVEARITDVTDLSDWLEDYVLLHRILGEILPLTVKLAVSSTFFINLRRRTVAIYLL</sequence>
<feature type="chain" id="PRO_0000165269" description="Uncharacterized 12.9 kDa protein in GpA 3'region">
    <location>
        <begin position="1"/>
        <end position="109"/>
    </location>
</feature>
<dbReference type="EMBL" id="AF063097">
    <property type="protein sequence ID" value="AAD03307.1"/>
    <property type="molecule type" value="Genomic_DNA"/>
</dbReference>
<dbReference type="PIR" id="S33836">
    <property type="entry name" value="S33836"/>
</dbReference>
<dbReference type="RefSeq" id="NP_046796.1">
    <property type="nucleotide sequence ID" value="NC_001895.1"/>
</dbReference>
<dbReference type="SMR" id="Q06426"/>
<dbReference type="KEGG" id="vg:77440822"/>
<dbReference type="Proteomes" id="UP000009092">
    <property type="component" value="Genome"/>
</dbReference>
<dbReference type="Gene3D" id="2.30.130.30">
    <property type="entry name" value="Hypothetical protein"/>
    <property type="match status" value="1"/>
</dbReference>
<dbReference type="InterPro" id="IPR039440">
    <property type="entry name" value="DUF3850"/>
</dbReference>
<dbReference type="InterPro" id="IPR015947">
    <property type="entry name" value="PUA-like_sf"/>
</dbReference>
<dbReference type="Pfam" id="PF12961">
    <property type="entry name" value="DUF3850"/>
    <property type="match status" value="1"/>
</dbReference>
<dbReference type="SUPFAM" id="SSF88697">
    <property type="entry name" value="PUA domain-like"/>
    <property type="match status" value="1"/>
</dbReference>
<proteinExistence type="predicted"/>
<organismHost>
    <name type="scientific">Enterobacteriaceae</name>
    <dbReference type="NCBI Taxonomy" id="543"/>
</organismHost>
<reference key="1">
    <citation type="journal article" date="1993" name="J. Mol. Biol.">
        <title>Studies of bacteriophage P2 DNA replication. The DNA sequence of the cis-acting gene A and ori region and construction of a P2 mini-chromosome.</title>
        <authorList>
            <person name="Liu Y."/>
            <person name="Saha S."/>
            <person name="Haggaard-Ljungquist E."/>
        </authorList>
    </citation>
    <scope>NUCLEOTIDE SEQUENCE [GENOMIC DNA]</scope>
</reference>
<protein>
    <recommendedName>
        <fullName>Uncharacterized 12.9 kDa protein in GpA 3'region</fullName>
    </recommendedName>
    <alternativeName>
        <fullName>ORF5</fullName>
    </alternativeName>
</protein>
<gene>
    <name type="primary">ORF91</name>
</gene>
<keyword id="KW-1185">Reference proteome</keyword>
<accession>Q06426</accession>
<organism>
    <name type="scientific">Escherichia phage P2</name>
    <name type="common">Bacteriophage P2</name>
    <dbReference type="NCBI Taxonomy" id="2905681"/>
    <lineage>
        <taxon>Viruses</taxon>
        <taxon>Duplodnaviria</taxon>
        <taxon>Heunggongvirae</taxon>
        <taxon>Uroviricota</taxon>
        <taxon>Caudoviricetes</taxon>
        <taxon>Peduoviridae</taxon>
        <taxon>Peduovirus</taxon>
        <taxon>Peduovirus P2</taxon>
    </lineage>
</organism>